<keyword id="KW-0056">Arginine metabolism</keyword>
<keyword id="KW-0520">NAD</keyword>
<keyword id="KW-0560">Oxidoreductase</keyword>
<reference key="1">
    <citation type="journal article" date="2009" name="PLoS Genet.">
        <title>Organised genome dynamics in the Escherichia coli species results in highly diverse adaptive paths.</title>
        <authorList>
            <person name="Touchon M."/>
            <person name="Hoede C."/>
            <person name="Tenaillon O."/>
            <person name="Barbe V."/>
            <person name="Baeriswyl S."/>
            <person name="Bidet P."/>
            <person name="Bingen E."/>
            <person name="Bonacorsi S."/>
            <person name="Bouchier C."/>
            <person name="Bouvet O."/>
            <person name="Calteau A."/>
            <person name="Chiapello H."/>
            <person name="Clermont O."/>
            <person name="Cruveiller S."/>
            <person name="Danchin A."/>
            <person name="Diard M."/>
            <person name="Dossat C."/>
            <person name="Karoui M.E."/>
            <person name="Frapy E."/>
            <person name="Garry L."/>
            <person name="Ghigo J.M."/>
            <person name="Gilles A.M."/>
            <person name="Johnson J."/>
            <person name="Le Bouguenec C."/>
            <person name="Lescat M."/>
            <person name="Mangenot S."/>
            <person name="Martinez-Jehanne V."/>
            <person name="Matic I."/>
            <person name="Nassif X."/>
            <person name="Oztas S."/>
            <person name="Petit M.A."/>
            <person name="Pichon C."/>
            <person name="Rouy Z."/>
            <person name="Ruf C.S."/>
            <person name="Schneider D."/>
            <person name="Tourret J."/>
            <person name="Vacherie B."/>
            <person name="Vallenet D."/>
            <person name="Medigue C."/>
            <person name="Rocha E.P.C."/>
            <person name="Denamur E."/>
        </authorList>
    </citation>
    <scope>NUCLEOTIDE SEQUENCE [LARGE SCALE GENOMIC DNA]</scope>
    <source>
        <strain>ATCC 35469 / DSM 13698 / BCRC 15582 / CCUG 18766 / IAM 14443 / JCM 21226 / LMG 7866 / NBRC 102419 / NCTC 12128 / CDC 0568-73</strain>
    </source>
</reference>
<name>ASTD_ESCF3</name>
<protein>
    <recommendedName>
        <fullName evidence="1">N-succinylglutamate 5-semialdehyde dehydrogenase</fullName>
        <ecNumber evidence="1">1.2.1.71</ecNumber>
    </recommendedName>
    <alternativeName>
        <fullName evidence="1">Succinylglutamic semialdehyde dehydrogenase</fullName>
        <shortName evidence="1">SGSD</shortName>
    </alternativeName>
</protein>
<gene>
    <name evidence="1" type="primary">astD</name>
    <name type="ordered locus">EFER_1319</name>
</gene>
<proteinExistence type="inferred from homology"/>
<dbReference type="EC" id="1.2.1.71" evidence="1"/>
<dbReference type="EMBL" id="CU928158">
    <property type="protein sequence ID" value="CAQ88843.1"/>
    <property type="molecule type" value="Genomic_DNA"/>
</dbReference>
<dbReference type="RefSeq" id="WP_000177298.1">
    <property type="nucleotide sequence ID" value="NC_011740.1"/>
</dbReference>
<dbReference type="SMR" id="B7LQ46"/>
<dbReference type="GeneID" id="75057637"/>
<dbReference type="KEGG" id="efe:EFER_1319"/>
<dbReference type="HOGENOM" id="CLU_005391_1_0_6"/>
<dbReference type="OrthoDB" id="9812625at2"/>
<dbReference type="UniPathway" id="UPA00185">
    <property type="reaction ID" value="UER00282"/>
</dbReference>
<dbReference type="Proteomes" id="UP000000745">
    <property type="component" value="Chromosome"/>
</dbReference>
<dbReference type="GO" id="GO:0004030">
    <property type="term" value="F:aldehyde dehydrogenase [NAD(P)+] activity"/>
    <property type="evidence" value="ECO:0007669"/>
    <property type="project" value="UniProtKB-ARBA"/>
</dbReference>
<dbReference type="GO" id="GO:0043824">
    <property type="term" value="F:succinylglutamate-semialdehyde dehydrogenase activity"/>
    <property type="evidence" value="ECO:0007669"/>
    <property type="project" value="UniProtKB-EC"/>
</dbReference>
<dbReference type="GO" id="GO:0019544">
    <property type="term" value="P:arginine catabolic process to glutamate"/>
    <property type="evidence" value="ECO:0007669"/>
    <property type="project" value="UniProtKB-UniRule"/>
</dbReference>
<dbReference type="GO" id="GO:0019545">
    <property type="term" value="P:arginine catabolic process to succinate"/>
    <property type="evidence" value="ECO:0007669"/>
    <property type="project" value="UniProtKB-UniRule"/>
</dbReference>
<dbReference type="CDD" id="cd07095">
    <property type="entry name" value="ALDH_SGSD_AstD"/>
    <property type="match status" value="1"/>
</dbReference>
<dbReference type="FunFam" id="3.40.309.10:FF:000013">
    <property type="entry name" value="N-succinylglutamate 5-semialdehyde dehydrogenase"/>
    <property type="match status" value="1"/>
</dbReference>
<dbReference type="FunFam" id="3.40.605.10:FF:000010">
    <property type="entry name" value="N-succinylglutamate 5-semialdehyde dehydrogenase"/>
    <property type="match status" value="1"/>
</dbReference>
<dbReference type="Gene3D" id="3.40.605.10">
    <property type="entry name" value="Aldehyde Dehydrogenase, Chain A, domain 1"/>
    <property type="match status" value="1"/>
</dbReference>
<dbReference type="Gene3D" id="3.40.309.10">
    <property type="entry name" value="Aldehyde Dehydrogenase, Chain A, domain 2"/>
    <property type="match status" value="1"/>
</dbReference>
<dbReference type="HAMAP" id="MF_01174">
    <property type="entry name" value="Aldedh_AstD"/>
    <property type="match status" value="1"/>
</dbReference>
<dbReference type="InterPro" id="IPR016161">
    <property type="entry name" value="Ald_DH/histidinol_DH"/>
</dbReference>
<dbReference type="InterPro" id="IPR016163">
    <property type="entry name" value="Ald_DH_C"/>
</dbReference>
<dbReference type="InterPro" id="IPR016160">
    <property type="entry name" value="Ald_DH_CS_CYS"/>
</dbReference>
<dbReference type="InterPro" id="IPR029510">
    <property type="entry name" value="Ald_DH_CS_GLU"/>
</dbReference>
<dbReference type="InterPro" id="IPR016162">
    <property type="entry name" value="Ald_DH_N"/>
</dbReference>
<dbReference type="InterPro" id="IPR015590">
    <property type="entry name" value="Aldehyde_DH_dom"/>
</dbReference>
<dbReference type="InterPro" id="IPR017649">
    <property type="entry name" value="SuccinylGlu_semiald_DH_AstD"/>
</dbReference>
<dbReference type="NCBIfam" id="TIGR03240">
    <property type="entry name" value="arg_catab_astD"/>
    <property type="match status" value="1"/>
</dbReference>
<dbReference type="NCBIfam" id="NF006992">
    <property type="entry name" value="PRK09457.1"/>
    <property type="match status" value="1"/>
</dbReference>
<dbReference type="PANTHER" id="PTHR11699">
    <property type="entry name" value="ALDEHYDE DEHYDROGENASE-RELATED"/>
    <property type="match status" value="1"/>
</dbReference>
<dbReference type="Pfam" id="PF00171">
    <property type="entry name" value="Aldedh"/>
    <property type="match status" value="1"/>
</dbReference>
<dbReference type="SUPFAM" id="SSF53720">
    <property type="entry name" value="ALDH-like"/>
    <property type="match status" value="1"/>
</dbReference>
<dbReference type="PROSITE" id="PS00070">
    <property type="entry name" value="ALDEHYDE_DEHYDR_CYS"/>
    <property type="match status" value="1"/>
</dbReference>
<dbReference type="PROSITE" id="PS00687">
    <property type="entry name" value="ALDEHYDE_DEHYDR_GLU"/>
    <property type="match status" value="1"/>
</dbReference>
<sequence>MTLWINGDWVTGQGALRVKCNPVSGELLWQGNDADAAQVGQACRAARAAFPRWARLSFGDRQVRVERFAGLLESNKVELTAIIARETGKPRWEAATEVTAMINKIAISIKAYHVRTGEQRSEMPDGAASLRHRPHGVLAVFGPYNFPGHLPNGHIVPALLAGNTVIFKPSELTPWSGEAVMRLWQQAGLPSGVLNLVQGGRETGQALSALEDLDGLLFTGSANTGYQLHRQLSGQPEKILALEMGGNNPLIIDDVADIDAAVHLTIQSAFVTAGQRCTCARRLLLKSGAQGDAFLARLVAVSQRLTPGNWDDEPQPFIGGLISEQAAHQVVTAWQELEAMGGRTQLAPRLLRAGTSLLTPGIVEMTGVAGVPDEEVFGPLLRVWRYDTFDEAIRMANNTRFGLSCGLVSSRRDKFEQLLLEARAGIVNWNKPLTGAASTAPFGGVGASGNHRPSAWYAADYCAWPMASLESDSLTLPTTLNPGLDFSEEVER</sequence>
<evidence type="ECO:0000255" key="1">
    <source>
        <dbReference type="HAMAP-Rule" id="MF_01174"/>
    </source>
</evidence>
<organism>
    <name type="scientific">Escherichia fergusonii (strain ATCC 35469 / DSM 13698 / CCUG 18766 / IAM 14443 / JCM 21226 / LMG 7866 / NBRC 102419 / NCTC 12128 / CDC 0568-73)</name>
    <dbReference type="NCBI Taxonomy" id="585054"/>
    <lineage>
        <taxon>Bacteria</taxon>
        <taxon>Pseudomonadati</taxon>
        <taxon>Pseudomonadota</taxon>
        <taxon>Gammaproteobacteria</taxon>
        <taxon>Enterobacterales</taxon>
        <taxon>Enterobacteriaceae</taxon>
        <taxon>Escherichia</taxon>
    </lineage>
</organism>
<comment type="function">
    <text evidence="1">Catalyzes the NAD-dependent reduction of succinylglutamate semialdehyde into succinylglutamate.</text>
</comment>
<comment type="catalytic activity">
    <reaction evidence="1">
        <text>N-succinyl-L-glutamate 5-semialdehyde + NAD(+) + H2O = N-succinyl-L-glutamate + NADH + 2 H(+)</text>
        <dbReference type="Rhea" id="RHEA:10812"/>
        <dbReference type="ChEBI" id="CHEBI:15377"/>
        <dbReference type="ChEBI" id="CHEBI:15378"/>
        <dbReference type="ChEBI" id="CHEBI:57540"/>
        <dbReference type="ChEBI" id="CHEBI:57945"/>
        <dbReference type="ChEBI" id="CHEBI:58520"/>
        <dbReference type="ChEBI" id="CHEBI:58763"/>
        <dbReference type="EC" id="1.2.1.71"/>
    </reaction>
</comment>
<comment type="pathway">
    <text evidence="1">Amino-acid degradation; L-arginine degradation via AST pathway; L-glutamate and succinate from L-arginine: step 4/5.</text>
</comment>
<comment type="similarity">
    <text evidence="1">Belongs to the aldehyde dehydrogenase family. AstD subfamily.</text>
</comment>
<accession>B7LQ46</accession>
<feature type="chain" id="PRO_1000138050" description="N-succinylglutamate 5-semialdehyde dehydrogenase">
    <location>
        <begin position="1"/>
        <end position="492"/>
    </location>
</feature>
<feature type="active site" evidence="1">
    <location>
        <position position="243"/>
    </location>
</feature>
<feature type="active site" evidence="1">
    <location>
        <position position="277"/>
    </location>
</feature>
<feature type="binding site" evidence="1">
    <location>
        <begin position="220"/>
        <end position="225"/>
    </location>
    <ligand>
        <name>NAD(+)</name>
        <dbReference type="ChEBI" id="CHEBI:57540"/>
    </ligand>
</feature>